<sequence length="1439" mass="155139">MASSETEIRWAEPGLGKGPQRRRWAWAEDKRDVDRSSSQSWEEERLFPNATSPELLEDFRLAQQHLPPLEWDPHPQPDGHQDSESGETSGEEAEAEDVDSPASSHEPLAWLPQQGRQLDMTEEEPDGTLGSLEVEEAGESSSRLGYEAGLSLEGHGNTSPMALGHGQARGWVASGEQASGDKLSEHSEVNPSVELSPARSWSSGTVSLDHPSDSLDSTWEGETDGPQPTALAETLPEGPSHHLLSPDGRTGGSVARATPMEFQDSSAPPAQSPQHATDRWRRETTRFFCPQPKEHIWKQTKTSPKPLPSRFIGSISPLNPQPRPTRQGRPLPRQGATLAGRSSSNAPKYGRGQLNYPLPDFSKVGPRVRFPKDESYRPPKSRSHNRKPQAPARPLIFKSPAEIVQEVLLSSGEAALAKDTPPAHPITRVPQEFQTPEQATELVHQLQEDYHRLLTKYAEAENTIDQLRLGAKVNLFSDPPQPNHSIHTGMVPQGTKVLSFTIPQPRSAEWWPGPAEDPQASAASGWPSARGDLSPSSLTSMPTLGWLPENRDISEDQSSAEQTQALASQASQFLAKVESFERLIQAGRLMPQDQVKGFQRLKAAHAALEEEYLKACREQHPAQPLAGSKGTPGRFDPRRELEAEIYRLGSCLEELKEHIDQTQQEPEPPGSDSALDSTPALPCLHQPTHLPAPSGQAPMPAIKTSCPEPATTTAAASTGPCPLHVNVEVSSGNSEVEDRPQDPLARLRHKELQMEQVYHGLMERYLSVKSLPEAMRMEEEEEGEEEEEEEGGGDSLEVDGVAATPGKAEATRVLPRQCPVQAEKSHGAPLEEATEKMVSMKPPGFQASLARDGHMSGLGKAEAAPPGPGVPPHPPGTKSAASHQSSMTSLEGSGISERLPQKPLHRGGGPHLEETWMASPETDSGFVGSETSRVSPLTQTPEHRLSHISTAGTLAQPFAASVPRDGASYPKARGSLIPRRATEPSTPRSQAQRYLSSPSGPLRQRAPNFSLERTLAAEMAVPGSEFEGHKRISEQPLPNKTISPPPAPAPAAAPLPCGPTETIPSFLLTRAGRDQAICELQEEVSRLRLRLEDSLHQPLQGSPTRPASAFDRPARTRGRPADSPATWGSHYGSKSTERLPGEPRGEEQIVPPGRQRARSSSVPREVLRLSLSSESELPSLPLFSEKSKTTKDSPQAARDGKRGVGSAGWPDRVTFRGQYTGHEYHVLSPKAVPKGNGTVSCPHCRPIRTQDAGGAVTGDPLGPPPADTLQCPLCGQVGSPPEADGPGSATSGAEKATTRRKASSTPSPKQRSKQAGSSPRPPPGLWYLATAPPAPAPPAFAYISSVPIMPYPPAAVYYAPAGPTSAQPAAKWPPTASPPPARRHRHSIQLDLGDLEELNKALSRAVQAAESVRSTTRQMRSSLSADLRQAHSLRGSCLF</sequence>
<evidence type="ECO:0000250" key="1">
    <source>
        <dbReference type="UniProtKB" id="Q80VW7"/>
    </source>
</evidence>
<evidence type="ECO:0000256" key="2">
    <source>
        <dbReference type="SAM" id="MobiDB-lite"/>
    </source>
</evidence>
<evidence type="ECO:0000269" key="3">
    <source>
    </source>
</evidence>
<evidence type="ECO:0000269" key="4">
    <source>
    </source>
</evidence>
<evidence type="ECO:0000269" key="5">
    <source>
    </source>
</evidence>
<evidence type="ECO:0000269" key="6">
    <source>
    </source>
</evidence>
<evidence type="ECO:0000303" key="7">
    <source>
    </source>
</evidence>
<evidence type="ECO:0000303" key="8">
    <source>
    </source>
</evidence>
<evidence type="ECO:0000303" key="9">
    <source>
    </source>
</evidence>
<evidence type="ECO:0000303" key="10">
    <source>
    </source>
</evidence>
<evidence type="ECO:0000305" key="11"/>
<evidence type="ECO:0000312" key="12">
    <source>
        <dbReference type="HGNC" id="HGNC:24108"/>
    </source>
</evidence>
<evidence type="ECO:0007744" key="13">
    <source>
    </source>
</evidence>
<evidence type="ECO:0007744" key="14">
    <source>
    </source>
</evidence>
<keyword id="KW-0010">Activator</keyword>
<keyword id="KW-0025">Alternative splicing</keyword>
<keyword id="KW-0963">Cytoplasm</keyword>
<keyword id="KW-0206">Cytoskeleton</keyword>
<keyword id="KW-0238">DNA-binding</keyword>
<keyword id="KW-0493">Microtubule</keyword>
<keyword id="KW-0524">Neurogenesis</keyword>
<keyword id="KW-0539">Nucleus</keyword>
<keyword id="KW-0597">Phosphoprotein</keyword>
<keyword id="KW-1267">Proteomics identification</keyword>
<keyword id="KW-1185">Reference proteome</keyword>
<keyword id="KW-0804">Transcription</keyword>
<keyword id="KW-0805">Transcription regulation</keyword>
<proteinExistence type="evidence at protein level"/>
<reference key="1">
    <citation type="journal article" date="2005" name="DNA Cell Biol.">
        <title>The human AKNA gene expresses multiple transcripts and protein isoforms as a result of alternative promoter usage, splicing, and polyadenylation.</title>
        <authorList>
            <person name="Sims-Mourtada J.C."/>
            <person name="Bruce S."/>
            <person name="McKeller M.R."/>
            <person name="Rangel R."/>
            <person name="Guzman-Rojas L."/>
            <person name="Cain K."/>
            <person name="Lopez C."/>
            <person name="Zimonjic D.B."/>
            <person name="Popescu N.C."/>
            <person name="Gordon J."/>
            <person name="Wilkinson M.F."/>
            <person name="Martinez-Valdez H."/>
        </authorList>
    </citation>
    <scope>NUCLEOTIDE SEQUENCE [MRNA] (ISOFORMS 1; 2; 5; 6 AND 7)</scope>
</reference>
<reference key="2">
    <citation type="journal article" date="2001" name="DNA Res.">
        <title>Prediction of the coding sequences of unidentified human genes. XXII. The complete sequences of 50 new cDNA clones which code for large proteins.</title>
        <authorList>
            <person name="Nagase T."/>
            <person name="Kikuno R."/>
            <person name="Ohara O."/>
        </authorList>
    </citation>
    <scope>NUCLEOTIDE SEQUENCE [LARGE SCALE MRNA] (ISOFORM 3)</scope>
    <scope>VARIANT LEU-624</scope>
    <source>
        <tissue>Brain</tissue>
    </source>
</reference>
<reference key="3">
    <citation type="journal article" date="2004" name="Nat. Genet.">
        <title>Complete sequencing and characterization of 21,243 full-length human cDNAs.</title>
        <authorList>
            <person name="Ota T."/>
            <person name="Suzuki Y."/>
            <person name="Nishikawa T."/>
            <person name="Otsuki T."/>
            <person name="Sugiyama T."/>
            <person name="Irie R."/>
            <person name="Wakamatsu A."/>
            <person name="Hayashi K."/>
            <person name="Sato H."/>
            <person name="Nagai K."/>
            <person name="Kimura K."/>
            <person name="Makita H."/>
            <person name="Sekine M."/>
            <person name="Obayashi M."/>
            <person name="Nishi T."/>
            <person name="Shibahara T."/>
            <person name="Tanaka T."/>
            <person name="Ishii S."/>
            <person name="Yamamoto J."/>
            <person name="Saito K."/>
            <person name="Kawai Y."/>
            <person name="Isono Y."/>
            <person name="Nakamura Y."/>
            <person name="Nagahari K."/>
            <person name="Murakami K."/>
            <person name="Yasuda T."/>
            <person name="Iwayanagi T."/>
            <person name="Wagatsuma M."/>
            <person name="Shiratori A."/>
            <person name="Sudo H."/>
            <person name="Hosoiri T."/>
            <person name="Kaku Y."/>
            <person name="Kodaira H."/>
            <person name="Kondo H."/>
            <person name="Sugawara M."/>
            <person name="Takahashi M."/>
            <person name="Kanda K."/>
            <person name="Yokoi T."/>
            <person name="Furuya T."/>
            <person name="Kikkawa E."/>
            <person name="Omura Y."/>
            <person name="Abe K."/>
            <person name="Kamihara K."/>
            <person name="Katsuta N."/>
            <person name="Sato K."/>
            <person name="Tanikawa M."/>
            <person name="Yamazaki M."/>
            <person name="Ninomiya K."/>
            <person name="Ishibashi T."/>
            <person name="Yamashita H."/>
            <person name="Murakawa K."/>
            <person name="Fujimori K."/>
            <person name="Tanai H."/>
            <person name="Kimata M."/>
            <person name="Watanabe M."/>
            <person name="Hiraoka S."/>
            <person name="Chiba Y."/>
            <person name="Ishida S."/>
            <person name="Ono Y."/>
            <person name="Takiguchi S."/>
            <person name="Watanabe S."/>
            <person name="Yosida M."/>
            <person name="Hotuta T."/>
            <person name="Kusano J."/>
            <person name="Kanehori K."/>
            <person name="Takahashi-Fujii A."/>
            <person name="Hara H."/>
            <person name="Tanase T.-O."/>
            <person name="Nomura Y."/>
            <person name="Togiya S."/>
            <person name="Komai F."/>
            <person name="Hara R."/>
            <person name="Takeuchi K."/>
            <person name="Arita M."/>
            <person name="Imose N."/>
            <person name="Musashino K."/>
            <person name="Yuuki H."/>
            <person name="Oshima A."/>
            <person name="Sasaki N."/>
            <person name="Aotsuka S."/>
            <person name="Yoshikawa Y."/>
            <person name="Matsunawa H."/>
            <person name="Ichihara T."/>
            <person name="Shiohata N."/>
            <person name="Sano S."/>
            <person name="Moriya S."/>
            <person name="Momiyama H."/>
            <person name="Satoh N."/>
            <person name="Takami S."/>
            <person name="Terashima Y."/>
            <person name="Suzuki O."/>
            <person name="Nakagawa S."/>
            <person name="Senoh A."/>
            <person name="Mizoguchi H."/>
            <person name="Goto Y."/>
            <person name="Shimizu F."/>
            <person name="Wakebe H."/>
            <person name="Hishigaki H."/>
            <person name="Watanabe T."/>
            <person name="Sugiyama A."/>
            <person name="Takemoto M."/>
            <person name="Kawakami B."/>
            <person name="Yamazaki M."/>
            <person name="Watanabe K."/>
            <person name="Kumagai A."/>
            <person name="Itakura S."/>
            <person name="Fukuzumi Y."/>
            <person name="Fujimori Y."/>
            <person name="Komiyama M."/>
            <person name="Tashiro H."/>
            <person name="Tanigami A."/>
            <person name="Fujiwara T."/>
            <person name="Ono T."/>
            <person name="Yamada K."/>
            <person name="Fujii Y."/>
            <person name="Ozaki K."/>
            <person name="Hirao M."/>
            <person name="Ohmori Y."/>
            <person name="Kawabata A."/>
            <person name="Hikiji T."/>
            <person name="Kobatake N."/>
            <person name="Inagaki H."/>
            <person name="Ikema Y."/>
            <person name="Okamoto S."/>
            <person name="Okitani R."/>
            <person name="Kawakami T."/>
            <person name="Noguchi S."/>
            <person name="Itoh T."/>
            <person name="Shigeta K."/>
            <person name="Senba T."/>
            <person name="Matsumura K."/>
            <person name="Nakajima Y."/>
            <person name="Mizuno T."/>
            <person name="Morinaga M."/>
            <person name="Sasaki M."/>
            <person name="Togashi T."/>
            <person name="Oyama M."/>
            <person name="Hata H."/>
            <person name="Watanabe M."/>
            <person name="Komatsu T."/>
            <person name="Mizushima-Sugano J."/>
            <person name="Satoh T."/>
            <person name="Shirai Y."/>
            <person name="Takahashi Y."/>
            <person name="Nakagawa K."/>
            <person name="Okumura K."/>
            <person name="Nagase T."/>
            <person name="Nomura N."/>
            <person name="Kikuchi H."/>
            <person name="Masuho Y."/>
            <person name="Yamashita R."/>
            <person name="Nakai K."/>
            <person name="Yada T."/>
            <person name="Nakamura Y."/>
            <person name="Ohara O."/>
            <person name="Isogai T."/>
            <person name="Sugano S."/>
        </authorList>
    </citation>
    <scope>NUCLEOTIDE SEQUENCE [LARGE SCALE MRNA] (ISOFORMS 1 AND 8)</scope>
    <scope>VARIANTS LEU-624; GLN-1119 AND PRO-1303</scope>
    <source>
        <tissue>Spleen</tissue>
    </source>
</reference>
<reference key="4">
    <citation type="journal article" date="2004" name="Nature">
        <title>DNA sequence and analysis of human chromosome 9.</title>
        <authorList>
            <person name="Humphray S.J."/>
            <person name="Oliver K."/>
            <person name="Hunt A.R."/>
            <person name="Plumb R.W."/>
            <person name="Loveland J.E."/>
            <person name="Howe K.L."/>
            <person name="Andrews T.D."/>
            <person name="Searle S."/>
            <person name="Hunt S.E."/>
            <person name="Scott C.E."/>
            <person name="Jones M.C."/>
            <person name="Ainscough R."/>
            <person name="Almeida J.P."/>
            <person name="Ambrose K.D."/>
            <person name="Ashwell R.I.S."/>
            <person name="Babbage A.K."/>
            <person name="Babbage S."/>
            <person name="Bagguley C.L."/>
            <person name="Bailey J."/>
            <person name="Banerjee R."/>
            <person name="Barker D.J."/>
            <person name="Barlow K.F."/>
            <person name="Bates K."/>
            <person name="Beasley H."/>
            <person name="Beasley O."/>
            <person name="Bird C.P."/>
            <person name="Bray-Allen S."/>
            <person name="Brown A.J."/>
            <person name="Brown J.Y."/>
            <person name="Burford D."/>
            <person name="Burrill W."/>
            <person name="Burton J."/>
            <person name="Carder C."/>
            <person name="Carter N.P."/>
            <person name="Chapman J.C."/>
            <person name="Chen Y."/>
            <person name="Clarke G."/>
            <person name="Clark S.Y."/>
            <person name="Clee C.M."/>
            <person name="Clegg S."/>
            <person name="Collier R.E."/>
            <person name="Corby N."/>
            <person name="Crosier M."/>
            <person name="Cummings A.T."/>
            <person name="Davies J."/>
            <person name="Dhami P."/>
            <person name="Dunn M."/>
            <person name="Dutta I."/>
            <person name="Dyer L.W."/>
            <person name="Earthrowl M.E."/>
            <person name="Faulkner L."/>
            <person name="Fleming C.J."/>
            <person name="Frankish A."/>
            <person name="Frankland J.A."/>
            <person name="French L."/>
            <person name="Fricker D.G."/>
            <person name="Garner P."/>
            <person name="Garnett J."/>
            <person name="Ghori J."/>
            <person name="Gilbert J.G.R."/>
            <person name="Glison C."/>
            <person name="Grafham D.V."/>
            <person name="Gribble S."/>
            <person name="Griffiths C."/>
            <person name="Griffiths-Jones S."/>
            <person name="Grocock R."/>
            <person name="Guy J."/>
            <person name="Hall R.E."/>
            <person name="Hammond S."/>
            <person name="Harley J.L."/>
            <person name="Harrison E.S.I."/>
            <person name="Hart E.A."/>
            <person name="Heath P.D."/>
            <person name="Henderson C.D."/>
            <person name="Hopkins B.L."/>
            <person name="Howard P.J."/>
            <person name="Howden P.J."/>
            <person name="Huckle E."/>
            <person name="Johnson C."/>
            <person name="Johnson D."/>
            <person name="Joy A.A."/>
            <person name="Kay M."/>
            <person name="Keenan S."/>
            <person name="Kershaw J.K."/>
            <person name="Kimberley A.M."/>
            <person name="King A."/>
            <person name="Knights A."/>
            <person name="Laird G.K."/>
            <person name="Langford C."/>
            <person name="Lawlor S."/>
            <person name="Leongamornlert D.A."/>
            <person name="Leversha M."/>
            <person name="Lloyd C."/>
            <person name="Lloyd D.M."/>
            <person name="Lovell J."/>
            <person name="Martin S."/>
            <person name="Mashreghi-Mohammadi M."/>
            <person name="Matthews L."/>
            <person name="McLaren S."/>
            <person name="McLay K.E."/>
            <person name="McMurray A."/>
            <person name="Milne S."/>
            <person name="Nickerson T."/>
            <person name="Nisbett J."/>
            <person name="Nordsiek G."/>
            <person name="Pearce A.V."/>
            <person name="Peck A.I."/>
            <person name="Porter K.M."/>
            <person name="Pandian R."/>
            <person name="Pelan S."/>
            <person name="Phillimore B."/>
            <person name="Povey S."/>
            <person name="Ramsey Y."/>
            <person name="Rand V."/>
            <person name="Scharfe M."/>
            <person name="Sehra H.K."/>
            <person name="Shownkeen R."/>
            <person name="Sims S.K."/>
            <person name="Skuce C.D."/>
            <person name="Smith M."/>
            <person name="Steward C.A."/>
            <person name="Swarbreck D."/>
            <person name="Sycamore N."/>
            <person name="Tester J."/>
            <person name="Thorpe A."/>
            <person name="Tracey A."/>
            <person name="Tromans A."/>
            <person name="Thomas D.W."/>
            <person name="Wall M."/>
            <person name="Wallis J.M."/>
            <person name="West A.P."/>
            <person name="Whitehead S.L."/>
            <person name="Willey D.L."/>
            <person name="Williams S.A."/>
            <person name="Wilming L."/>
            <person name="Wray P.W."/>
            <person name="Young L."/>
            <person name="Ashurst J.L."/>
            <person name="Coulson A."/>
            <person name="Blocker H."/>
            <person name="Durbin R.M."/>
            <person name="Sulston J.E."/>
            <person name="Hubbard T."/>
            <person name="Jackson M.J."/>
            <person name="Bentley D.R."/>
            <person name="Beck S."/>
            <person name="Rogers J."/>
            <person name="Dunham I."/>
        </authorList>
    </citation>
    <scope>NUCLEOTIDE SEQUENCE [LARGE SCALE GENOMIC DNA]</scope>
</reference>
<reference key="5">
    <citation type="journal article" date="2004" name="Genome Res.">
        <title>The status, quality, and expansion of the NIH full-length cDNA project: the Mammalian Gene Collection (MGC).</title>
        <authorList>
            <consortium name="The MGC Project Team"/>
        </authorList>
    </citation>
    <scope>NUCLEOTIDE SEQUENCE [LARGE SCALE MRNA] (ISOFORMS 1 AND 4)</scope>
    <scope>VARIANT PRO-1303</scope>
    <source>
        <tissue>Eye</tissue>
    </source>
</reference>
<reference key="6">
    <citation type="journal article" date="2001" name="Nature">
        <title>Regulation of CD40 and CD40 ligand by the AT-hook transcription factor AKNA.</title>
        <authorList>
            <person name="Siddiqa A."/>
            <person name="Sims-Mourtada J.C."/>
            <person name="Guzman-Rojas L."/>
            <person name="Rangel R."/>
            <person name="Guret C."/>
            <person name="Madrid-Marina V."/>
            <person name="Sun Y."/>
            <person name="Martinez-Valdez H."/>
        </authorList>
    </citation>
    <scope>NUCLEOTIDE SEQUENCE [MRNA] OF 762-1395</scope>
    <scope>FUNCTION</scope>
    <scope>SUBCELLULAR LOCATION</scope>
    <scope>DNA-BINDING</scope>
    <scope>TISSUE SPECIFICITY</scope>
</reference>
<reference key="7">
    <citation type="journal article" date="2003" name="Nature">
        <title>Proteomic characterization of the human centrosome by protein correlation profiling.</title>
        <authorList>
            <person name="Andersen J.S."/>
            <person name="Wilkinson C.J."/>
            <person name="Mayor T."/>
            <person name="Mortensen P."/>
            <person name="Nigg E.A."/>
            <person name="Mann M."/>
        </authorList>
    </citation>
    <scope>IDENTIFICATION BY MASS SPECTROMETRY</scope>
    <source>
        <tissue>Lymphoblast</tissue>
    </source>
</reference>
<reference key="8">
    <citation type="journal article" date="2009" name="Sci. Signal.">
        <title>Quantitative phosphoproteomic analysis of T cell receptor signaling reveals system-wide modulation of protein-protein interactions.</title>
        <authorList>
            <person name="Mayya V."/>
            <person name="Lundgren D.H."/>
            <person name="Hwang S.-I."/>
            <person name="Rezaul K."/>
            <person name="Wu L."/>
            <person name="Eng J.K."/>
            <person name="Rodionov V."/>
            <person name="Han D.K."/>
        </authorList>
    </citation>
    <scope>PHOSPHORYLATION [LARGE SCALE ANALYSIS] AT SER-534 AND SER-1387</scope>
    <scope>IDENTIFICATION BY MASS SPECTROMETRY [LARGE SCALE ANALYSIS]</scope>
    <source>
        <tissue>Leukemic T-cell</tissue>
    </source>
</reference>
<reference key="9">
    <citation type="journal article" date="2013" name="J. Proteome Res.">
        <title>Toward a comprehensive characterization of a human cancer cell phosphoproteome.</title>
        <authorList>
            <person name="Zhou H."/>
            <person name="Di Palma S."/>
            <person name="Preisinger C."/>
            <person name="Peng M."/>
            <person name="Polat A.N."/>
            <person name="Heck A.J."/>
            <person name="Mohammed S."/>
        </authorList>
    </citation>
    <scope>PHOSPHORYLATION [LARGE SCALE ANALYSIS] AT SER-52; SER-316; SER-499; SER-767; SER-770; SER-848; SER-886; SER-997; SER-1010; SER-1228; SER-1377 AND SER-1424</scope>
    <scope>IDENTIFICATION BY MASS SPECTROMETRY [LARGE SCALE ANALYSIS]</scope>
    <source>
        <tissue>Erythroleukemia</tissue>
    </source>
</reference>
<accession>Q7Z591</accession>
<accession>Q05BK5</accession>
<accession>Q5T535</accession>
<accession>Q5T536</accession>
<accession>Q5T537</accession>
<accession>Q64FX6</accession>
<accession>Q64FX7</accession>
<accession>Q64FX8</accession>
<accession>Q64FY2</accession>
<accession>Q6ZMK0</accession>
<accession>Q6ZNL2</accession>
<accession>Q6ZTX0</accession>
<accession>Q8TET1</accession>
<accession>Q8TF33</accession>
<accession>Q96RR9</accession>
<accession>Q9H7P7</accession>
<dbReference type="EMBL" id="AY703039">
    <property type="protein sequence ID" value="AAU34186.1"/>
    <property type="molecule type" value="mRNA"/>
</dbReference>
<dbReference type="EMBL" id="AY703043">
    <property type="protein sequence ID" value="AAU34190.1"/>
    <property type="molecule type" value="mRNA"/>
</dbReference>
<dbReference type="EMBL" id="AY703044">
    <property type="protein sequence ID" value="AAU34191.1"/>
    <property type="molecule type" value="mRNA"/>
</dbReference>
<dbReference type="EMBL" id="AY703045">
    <property type="protein sequence ID" value="AAU34192.1"/>
    <property type="status" value="ALT_FRAME"/>
    <property type="molecule type" value="mRNA"/>
</dbReference>
<dbReference type="EMBL" id="AB075848">
    <property type="protein sequence ID" value="BAB85554.1"/>
    <property type="status" value="ALT_INIT"/>
    <property type="molecule type" value="mRNA"/>
</dbReference>
<dbReference type="EMBL" id="AK024431">
    <property type="protein sequence ID" value="BAB15721.1"/>
    <property type="molecule type" value="mRNA"/>
</dbReference>
<dbReference type="EMBL" id="AK074040">
    <property type="protein sequence ID" value="BAB84866.1"/>
    <property type="status" value="ALT_INIT"/>
    <property type="molecule type" value="mRNA"/>
</dbReference>
<dbReference type="EMBL" id="AK131082">
    <property type="protein sequence ID" value="BAC85132.1"/>
    <property type="status" value="ALT_SEQ"/>
    <property type="molecule type" value="mRNA"/>
</dbReference>
<dbReference type="EMBL" id="AK160382">
    <property type="protein sequence ID" value="BAD18725.1"/>
    <property type="status" value="ALT_SEQ"/>
    <property type="molecule type" value="mRNA"/>
</dbReference>
<dbReference type="EMBL" id="AL356796">
    <property type="status" value="NOT_ANNOTATED_CDS"/>
    <property type="molecule type" value="Genomic_DNA"/>
</dbReference>
<dbReference type="EMBL" id="BC042202">
    <property type="protein sequence ID" value="AAH42202.1"/>
    <property type="molecule type" value="mRNA"/>
</dbReference>
<dbReference type="EMBL" id="BC055285">
    <property type="protein sequence ID" value="AAH55285.1"/>
    <property type="molecule type" value="mRNA"/>
</dbReference>
<dbReference type="EMBL" id="AF286341">
    <property type="protein sequence ID" value="AAK83024.1"/>
    <property type="status" value="ALT_FRAME"/>
    <property type="molecule type" value="mRNA"/>
</dbReference>
<dbReference type="CCDS" id="CCDS6805.1">
    <molecule id="Q7Z591-1"/>
</dbReference>
<dbReference type="RefSeq" id="NP_001304879.1">
    <molecule id="Q7Z591-1"/>
    <property type="nucleotide sequence ID" value="NM_001317950.2"/>
</dbReference>
<dbReference type="RefSeq" id="NP_001304881.1">
    <molecule id="Q7Z591-7"/>
    <property type="nucleotide sequence ID" value="NM_001317952.1"/>
</dbReference>
<dbReference type="RefSeq" id="NP_110394.3">
    <molecule id="Q7Z591-1"/>
    <property type="nucleotide sequence ID" value="NM_030767.5"/>
</dbReference>
<dbReference type="RefSeq" id="XP_005252301.1">
    <molecule id="Q7Z591-1"/>
    <property type="nucleotide sequence ID" value="XM_005252244.3"/>
</dbReference>
<dbReference type="RefSeq" id="XP_005252302.1">
    <molecule id="Q7Z591-1"/>
    <property type="nucleotide sequence ID" value="XM_005252245.2"/>
</dbReference>
<dbReference type="RefSeq" id="XP_005252304.1">
    <molecule id="Q7Z591-1"/>
    <property type="nucleotide sequence ID" value="XM_005252247.6"/>
</dbReference>
<dbReference type="RefSeq" id="XP_006717357.1">
    <molecule id="Q7Z591-1"/>
    <property type="nucleotide sequence ID" value="XM_006717294.2"/>
</dbReference>
<dbReference type="RefSeq" id="XP_006717358.1">
    <property type="nucleotide sequence ID" value="XM_006717295.2"/>
</dbReference>
<dbReference type="RefSeq" id="XP_011517365.1">
    <molecule id="Q7Z591-7"/>
    <property type="nucleotide sequence ID" value="XM_011519063.3"/>
</dbReference>
<dbReference type="RefSeq" id="XP_011517367.2">
    <molecule id="Q7Z591-7"/>
    <property type="nucleotide sequence ID" value="XM_011519065.3"/>
</dbReference>
<dbReference type="RefSeq" id="XP_016870661.1">
    <property type="nucleotide sequence ID" value="XM_017015172.1"/>
</dbReference>
<dbReference type="RefSeq" id="XP_047279877.1">
    <molecule id="Q7Z591-1"/>
    <property type="nucleotide sequence ID" value="XM_047423921.1"/>
</dbReference>
<dbReference type="RefSeq" id="XP_047279878.1">
    <molecule id="Q7Z591-1"/>
    <property type="nucleotide sequence ID" value="XM_047423922.1"/>
</dbReference>
<dbReference type="SMR" id="Q7Z591"/>
<dbReference type="BioGRID" id="123268">
    <property type="interactions" value="8"/>
</dbReference>
<dbReference type="FunCoup" id="Q7Z591">
    <property type="interactions" value="677"/>
</dbReference>
<dbReference type="IntAct" id="Q7Z591">
    <property type="interactions" value="5"/>
</dbReference>
<dbReference type="MINT" id="Q7Z591"/>
<dbReference type="STRING" id="9606.ENSP00000303769"/>
<dbReference type="GlyGen" id="Q7Z591">
    <property type="glycosylation" value="5 sites, 1 O-linked glycan (1 site)"/>
</dbReference>
<dbReference type="iPTMnet" id="Q7Z591"/>
<dbReference type="PhosphoSitePlus" id="Q7Z591"/>
<dbReference type="BioMuta" id="AKNA"/>
<dbReference type="DMDM" id="150416853"/>
<dbReference type="jPOST" id="Q7Z591"/>
<dbReference type="MassIVE" id="Q7Z591"/>
<dbReference type="PaxDb" id="9606-ENSP00000303769"/>
<dbReference type="PeptideAtlas" id="Q7Z591"/>
<dbReference type="ProteomicsDB" id="69266">
    <molecule id="Q7Z591-1"/>
</dbReference>
<dbReference type="ProteomicsDB" id="69267">
    <molecule id="Q7Z591-2"/>
</dbReference>
<dbReference type="ProteomicsDB" id="69268">
    <molecule id="Q7Z591-3"/>
</dbReference>
<dbReference type="ProteomicsDB" id="69269">
    <molecule id="Q7Z591-4"/>
</dbReference>
<dbReference type="ProteomicsDB" id="69270">
    <molecule id="Q7Z591-5"/>
</dbReference>
<dbReference type="ProteomicsDB" id="69271">
    <molecule id="Q7Z591-6"/>
</dbReference>
<dbReference type="ProteomicsDB" id="69272">
    <molecule id="Q7Z591-7"/>
</dbReference>
<dbReference type="ProteomicsDB" id="69273">
    <molecule id="Q7Z591-8"/>
</dbReference>
<dbReference type="Pumba" id="Q7Z591"/>
<dbReference type="Antibodypedia" id="54667">
    <property type="antibodies" value="40 antibodies from 13 providers"/>
</dbReference>
<dbReference type="DNASU" id="80709"/>
<dbReference type="Ensembl" id="ENST00000223791.7">
    <molecule id="Q7Z591-8"/>
    <property type="protein sequence ID" value="ENSP00000223791.3"/>
    <property type="gene ID" value="ENSG00000106948.17"/>
</dbReference>
<dbReference type="Ensembl" id="ENST00000307564.8">
    <molecule id="Q7Z591-1"/>
    <property type="protein sequence ID" value="ENSP00000303769.4"/>
    <property type="gene ID" value="ENSG00000106948.17"/>
</dbReference>
<dbReference type="Ensembl" id="ENST00000312033.3">
    <molecule id="Q7Z591-3"/>
    <property type="protein sequence ID" value="ENSP00000309222.3"/>
    <property type="gene ID" value="ENSG00000106948.17"/>
</dbReference>
<dbReference type="Ensembl" id="ENST00000374075.9">
    <molecule id="Q7Z591-2"/>
    <property type="protein sequence ID" value="ENSP00000363188.5"/>
    <property type="gene ID" value="ENSG00000106948.17"/>
</dbReference>
<dbReference type="Ensembl" id="ENST00000374079.8">
    <molecule id="Q7Z591-4"/>
    <property type="protein sequence ID" value="ENSP00000363192.4"/>
    <property type="gene ID" value="ENSG00000106948.17"/>
</dbReference>
<dbReference type="Ensembl" id="ENST00000374088.8">
    <molecule id="Q7Z591-1"/>
    <property type="protein sequence ID" value="ENSP00000363201.3"/>
    <property type="gene ID" value="ENSG00000106948.17"/>
</dbReference>
<dbReference type="GeneID" id="80709"/>
<dbReference type="KEGG" id="hsa:80709"/>
<dbReference type="MANE-Select" id="ENST00000374088.8">
    <property type="protein sequence ID" value="ENSP00000363201.3"/>
    <property type="RefSeq nucleotide sequence ID" value="NM_001317950.2"/>
    <property type="RefSeq protein sequence ID" value="NP_001304879.1"/>
</dbReference>
<dbReference type="UCSC" id="uc004bio.5">
    <molecule id="Q7Z591-1"/>
    <property type="organism name" value="human"/>
</dbReference>
<dbReference type="AGR" id="HGNC:24108"/>
<dbReference type="CTD" id="80709"/>
<dbReference type="DisGeNET" id="80709"/>
<dbReference type="GeneCards" id="AKNA"/>
<dbReference type="HGNC" id="HGNC:24108">
    <property type="gene designation" value="AKNA"/>
</dbReference>
<dbReference type="HPA" id="ENSG00000106948">
    <property type="expression patterns" value="Tissue enhanced (lymphoid)"/>
</dbReference>
<dbReference type="MIM" id="605729">
    <property type="type" value="gene"/>
</dbReference>
<dbReference type="neXtProt" id="NX_Q7Z591"/>
<dbReference type="OpenTargets" id="ENSG00000106948"/>
<dbReference type="PharmGKB" id="PA134908332"/>
<dbReference type="VEuPathDB" id="HostDB:ENSG00000106948"/>
<dbReference type="eggNOG" id="ENOG502QRSN">
    <property type="taxonomic scope" value="Eukaryota"/>
</dbReference>
<dbReference type="GeneTree" id="ENSGT00940000154254"/>
<dbReference type="HOGENOM" id="CLU_005641_0_0_1"/>
<dbReference type="InParanoid" id="Q7Z591"/>
<dbReference type="OMA" id="PHLAMTE"/>
<dbReference type="OrthoDB" id="10035553at2759"/>
<dbReference type="PAN-GO" id="Q7Z591">
    <property type="GO annotations" value="4 GO annotations based on evolutionary models"/>
</dbReference>
<dbReference type="PhylomeDB" id="Q7Z591"/>
<dbReference type="TreeFam" id="TF336885"/>
<dbReference type="PathwayCommons" id="Q7Z591"/>
<dbReference type="SignaLink" id="Q7Z591"/>
<dbReference type="BioGRID-ORCS" id="80709">
    <property type="hits" value="11 hits in 1160 CRISPR screens"/>
</dbReference>
<dbReference type="ChiTaRS" id="AKNA">
    <property type="organism name" value="human"/>
</dbReference>
<dbReference type="GenomeRNAi" id="80709"/>
<dbReference type="Pharos" id="Q7Z591">
    <property type="development level" value="Tbio"/>
</dbReference>
<dbReference type="PRO" id="PR:Q7Z591"/>
<dbReference type="Proteomes" id="UP000005640">
    <property type="component" value="Chromosome 9"/>
</dbReference>
<dbReference type="RNAct" id="Q7Z591">
    <property type="molecule type" value="protein"/>
</dbReference>
<dbReference type="Bgee" id="ENSG00000106948">
    <property type="expression patterns" value="Expressed in granulocyte and 148 other cell types or tissues"/>
</dbReference>
<dbReference type="GO" id="GO:0005814">
    <property type="term" value="C:centriole"/>
    <property type="evidence" value="ECO:0000250"/>
    <property type="project" value="UniProtKB"/>
</dbReference>
<dbReference type="GO" id="GO:0005813">
    <property type="term" value="C:centrosome"/>
    <property type="evidence" value="ECO:0000314"/>
    <property type="project" value="HPA"/>
</dbReference>
<dbReference type="GO" id="GO:0005829">
    <property type="term" value="C:cytosol"/>
    <property type="evidence" value="ECO:0000314"/>
    <property type="project" value="HPA"/>
</dbReference>
<dbReference type="GO" id="GO:0001650">
    <property type="term" value="C:fibrillar center"/>
    <property type="evidence" value="ECO:0000314"/>
    <property type="project" value="HPA"/>
</dbReference>
<dbReference type="GO" id="GO:0043231">
    <property type="term" value="C:intracellular membrane-bounded organelle"/>
    <property type="evidence" value="ECO:0000314"/>
    <property type="project" value="HPA"/>
</dbReference>
<dbReference type="GO" id="GO:0016020">
    <property type="term" value="C:membrane"/>
    <property type="evidence" value="ECO:0007005"/>
    <property type="project" value="UniProtKB"/>
</dbReference>
<dbReference type="GO" id="GO:0005874">
    <property type="term" value="C:microtubule"/>
    <property type="evidence" value="ECO:0000250"/>
    <property type="project" value="UniProtKB"/>
</dbReference>
<dbReference type="GO" id="GO:0005654">
    <property type="term" value="C:nucleoplasm"/>
    <property type="evidence" value="ECO:0000314"/>
    <property type="project" value="HPA"/>
</dbReference>
<dbReference type="GO" id="GO:0003677">
    <property type="term" value="F:DNA binding"/>
    <property type="evidence" value="ECO:0007669"/>
    <property type="project" value="UniProtKB-KW"/>
</dbReference>
<dbReference type="GO" id="GO:0060232">
    <property type="term" value="P:delamination"/>
    <property type="evidence" value="ECO:0000250"/>
    <property type="project" value="UniProtKB"/>
</dbReference>
<dbReference type="GO" id="GO:0001837">
    <property type="term" value="P:epithelial to mesenchymal transition"/>
    <property type="evidence" value="ECO:0000250"/>
    <property type="project" value="UniProtKB"/>
</dbReference>
<dbReference type="GO" id="GO:0060234">
    <property type="term" value="P:neuroblast delamination"/>
    <property type="evidence" value="ECO:0000250"/>
    <property type="project" value="UniProtKB"/>
</dbReference>
<dbReference type="GO" id="GO:0021849">
    <property type="term" value="P:neuroblast division in subventricular zone"/>
    <property type="evidence" value="ECO:0000250"/>
    <property type="project" value="UniProtKB"/>
</dbReference>
<dbReference type="GO" id="GO:0045944">
    <property type="term" value="P:positive regulation of transcription by RNA polymerase II"/>
    <property type="evidence" value="ECO:0000314"/>
    <property type="project" value="NTNU_SB"/>
</dbReference>
<dbReference type="GO" id="GO:0050727">
    <property type="term" value="P:regulation of inflammatory response"/>
    <property type="evidence" value="ECO:0000250"/>
    <property type="project" value="UniProtKB"/>
</dbReference>
<dbReference type="InterPro" id="IPR052655">
    <property type="entry name" value="AKNA_Centrosome-Trans_reg"/>
</dbReference>
<dbReference type="InterPro" id="IPR022150">
    <property type="entry name" value="AKNA_dom"/>
</dbReference>
<dbReference type="PANTHER" id="PTHR21510">
    <property type="entry name" value="AKNA DOMAIN-CONTAINING PROTEIN"/>
    <property type="match status" value="1"/>
</dbReference>
<dbReference type="PANTHER" id="PTHR21510:SF15">
    <property type="entry name" value="MICROTUBULE ORGANIZATION PROTEIN AKNA"/>
    <property type="match status" value="1"/>
</dbReference>
<dbReference type="Pfam" id="PF12443">
    <property type="entry name" value="AKNA"/>
    <property type="match status" value="1"/>
</dbReference>
<comment type="function">
    <text evidence="1 3 11">Centrosomal protein that plays a key role in cell delamination by regulating microtubule organization (By similarity). Required for the delamination and retention of neural stem cells from the subventricular zone during neurogenesis (By similarity). Also regulates the epithelial-to-mesenchymal transition in other epithelial cells (By similarity). Acts by increasing centrosomal microtubule nucleation and recruiting nucleation factors and minus-end stabilizers, thereby destabilizing microtubules at the adherens junctions and mediating constriction of the apical endfoot (By similarity). In addition, may also act as a transcription factor that specifically activates the expression of the CD40 receptor and its ligand CD40L/CD154, two cell surface molecules on lymphocytes that are critical for antigen-dependent-B-cell development (PubMed:11268217). Binds to A/T-rich promoters (PubMed:11268217). It is unclear how it can both act as a microtubule organizer and as a transcription factor; additional evidences are required to reconcile these two apparently contradictory functions (Probable).</text>
</comment>
<comment type="subunit">
    <text evidence="1">Interacts with DCTN1. Interacts with MAPRE1/EB1. Interacts with ODF2. Interacts with CAMSAP3.</text>
</comment>
<comment type="interaction">
    <interactant intactId="EBI-2799297">
        <id>Q7Z591</id>
    </interactant>
    <interactant intactId="EBI-768015">
        <id>O95400</id>
        <label>CD2BP2</label>
    </interactant>
    <organismsDiffer>false</organismsDiffer>
    <experiments>2</experiments>
</comment>
<comment type="interaction">
    <interactant intactId="EBI-2799297">
        <id>Q7Z591</id>
    </interactant>
    <interactant intactId="EBI-8639312">
        <id>P25800</id>
        <label>LMO1</label>
    </interactant>
    <organismsDiffer>false</organismsDiffer>
    <experiments>3</experiments>
</comment>
<comment type="subcellular location">
    <subcellularLocation>
        <location evidence="1">Cytoplasm</location>
        <location evidence="1">Cytoskeleton</location>
        <location evidence="1">Microtubule organizing center</location>
        <location evidence="1">Centrosome</location>
        <location evidence="1">Centriole</location>
    </subcellularLocation>
    <subcellularLocation>
        <location evidence="3">Nucleus</location>
    </subcellularLocation>
    <text evidence="1">Localizes to the distal part of the subdistal appendages of the mother centriole in interphase. Also found at the proximal ends of centrioles and along microtubules. The centrosomal localization is dependent on centrioles. Dissociates from centrosomes during M-phase without proteolytic degradation and reassembles at the centrosomes during late telophase and early G1 phase. Dissociation and reassembly is regulated by phosphorylation.</text>
</comment>
<comment type="alternative products">
    <event type="alternative splicing"/>
    <isoform>
        <id>Q7Z591-1</id>
        <name>1</name>
        <name evidence="10">B2</name>
        <name evidence="10">D</name>
        <sequence type="displayed"/>
    </isoform>
    <isoform>
        <id>Q7Z591-2</id>
        <name>2</name>
        <name evidence="10">E</name>
        <sequence type="described" ref="VSP_025936"/>
    </isoform>
    <isoform>
        <id>Q7Z591-3</id>
        <name>3</name>
        <sequence type="described" ref="VSP_025939"/>
    </isoform>
    <isoform>
        <id>Q7Z591-4</id>
        <name>4</name>
        <sequence type="described" ref="VSP_025932 VSP_025940"/>
    </isoform>
    <isoform>
        <id>Q7Z591-5</id>
        <name>5</name>
        <name evidence="10">F1</name>
        <sequence type="described" ref="VSP_025933"/>
    </isoform>
    <isoform>
        <id>Q7Z591-6</id>
        <name>6</name>
        <sequence type="described" ref="VSP_025937 VSP_025938"/>
    </isoform>
    <isoform>
        <id>Q7Z591-7</id>
        <name>7</name>
        <name evidence="10">A</name>
        <sequence type="described" ref="VSP_025935"/>
    </isoform>
    <isoform>
        <id>Q7Z591-8</id>
        <name>8</name>
        <sequence type="described" ref="VSP_025934"/>
    </isoform>
</comment>
<comment type="tissue specificity">
    <text evidence="3">Predominantly expressed by lymphoid tissues. Highly expressed in the spleen, lymph nodes and peripheral blood leukocytes, expressed at lower level in the thymus. Mainly expressed by germinal center B-lymphocytes, a stage in which receptor and ligand interactions are crucial for B-lymphocyte maturation. Expressed by B- and T-lymphocytes, Natural killer cells and CD1a(+)CD14(-) but not CD1a(-)CD14(+) dendritic cells. Weakly or not expressed in fetal liver and in adult bone marrow.</text>
</comment>
<comment type="PTM">
    <text evidence="1">Phosphorylated; phosphorylation regulates dissociation from and reassembly at the centrosome.</text>
</comment>
<comment type="similarity">
    <text evidence="11">Belongs to the AKNA family.</text>
</comment>
<comment type="sequence caution" evidence="11">
    <conflict type="frameshift">
        <sequence resource="EMBL-CDS" id="AAK83024"/>
    </conflict>
</comment>
<comment type="sequence caution" evidence="11">
    <conflict type="frameshift">
        <sequence resource="EMBL-CDS" id="AAU34192"/>
    </conflict>
</comment>
<comment type="sequence caution" evidence="11">
    <conflict type="erroneous initiation">
        <sequence resource="EMBL-CDS" id="BAB84866"/>
    </conflict>
</comment>
<comment type="sequence caution" evidence="11">
    <conflict type="erroneous initiation">
        <sequence resource="EMBL-CDS" id="BAB85554"/>
    </conflict>
</comment>
<comment type="sequence caution" evidence="11">
    <conflict type="frameshift">
        <sequence resource="EMBL-CDS" id="BAC85132"/>
    </conflict>
</comment>
<comment type="sequence caution" evidence="11">
    <conflict type="frameshift">
        <sequence resource="EMBL-CDS" id="BAD18725"/>
    </conflict>
</comment>
<protein>
    <recommendedName>
        <fullName evidence="11">Microtubule organization protein AKNA</fullName>
    </recommendedName>
    <alternativeName>
        <fullName evidence="10">AT-hook-containing transcription factor</fullName>
    </alternativeName>
</protein>
<gene>
    <name evidence="10 12" type="primary">AKNA</name>
    <name evidence="7" type="synonym">KIAA1968</name>
</gene>
<name>AKNA_HUMAN</name>
<organism>
    <name type="scientific">Homo sapiens</name>
    <name type="common">Human</name>
    <dbReference type="NCBI Taxonomy" id="9606"/>
    <lineage>
        <taxon>Eukaryota</taxon>
        <taxon>Metazoa</taxon>
        <taxon>Chordata</taxon>
        <taxon>Craniata</taxon>
        <taxon>Vertebrata</taxon>
        <taxon>Euteleostomi</taxon>
        <taxon>Mammalia</taxon>
        <taxon>Eutheria</taxon>
        <taxon>Euarchontoglires</taxon>
        <taxon>Primates</taxon>
        <taxon>Haplorrhini</taxon>
        <taxon>Catarrhini</taxon>
        <taxon>Hominidae</taxon>
        <taxon>Homo</taxon>
    </lineage>
</organism>
<feature type="chain" id="PRO_0000289159" description="Microtubule organization protein AKNA">
    <location>
        <begin position="1"/>
        <end position="1439"/>
    </location>
</feature>
<feature type="DNA-binding region" description="A.T hook">
    <location>
        <begin position="1115"/>
        <end position="1123"/>
    </location>
</feature>
<feature type="region of interest" description="Disordered" evidence="2">
    <location>
        <begin position="1"/>
        <end position="394"/>
    </location>
</feature>
<feature type="region of interest" description="Disordered" evidence="2">
    <location>
        <begin position="507"/>
        <end position="562"/>
    </location>
</feature>
<feature type="region of interest" description="Disordered" evidence="2">
    <location>
        <begin position="659"/>
        <end position="682"/>
    </location>
</feature>
<feature type="region of interest" description="PEST">
    <location>
        <begin position="771"/>
        <end position="804"/>
    </location>
</feature>
<feature type="region of interest" description="Disordered" evidence="2">
    <location>
        <begin position="775"/>
        <end position="942"/>
    </location>
</feature>
<feature type="region of interest" description="PEST">
    <location>
        <begin position="911"/>
        <end position="932"/>
    </location>
</feature>
<feature type="region of interest" description="Disordered" evidence="2">
    <location>
        <begin position="977"/>
        <end position="1005"/>
    </location>
</feature>
<feature type="region of interest" description="Disordered" evidence="2">
    <location>
        <begin position="1095"/>
        <end position="1165"/>
    </location>
</feature>
<feature type="region of interest" description="Disordered" evidence="2">
    <location>
        <begin position="1180"/>
        <end position="1211"/>
    </location>
</feature>
<feature type="region of interest" description="Disordered" evidence="2">
    <location>
        <begin position="1252"/>
        <end position="1329"/>
    </location>
</feature>
<feature type="compositionally biased region" description="Basic and acidic residues" evidence="2">
    <location>
        <begin position="1"/>
        <end position="10"/>
    </location>
</feature>
<feature type="compositionally biased region" description="Basic and acidic residues" evidence="2">
    <location>
        <begin position="25"/>
        <end position="35"/>
    </location>
</feature>
<feature type="compositionally biased region" description="Basic and acidic residues" evidence="2">
    <location>
        <begin position="71"/>
        <end position="83"/>
    </location>
</feature>
<feature type="compositionally biased region" description="Acidic residues" evidence="2">
    <location>
        <begin position="89"/>
        <end position="99"/>
    </location>
</feature>
<feature type="compositionally biased region" description="Polar residues" evidence="2">
    <location>
        <begin position="263"/>
        <end position="275"/>
    </location>
</feature>
<feature type="compositionally biased region" description="Basic and acidic residues" evidence="2">
    <location>
        <begin position="276"/>
        <end position="285"/>
    </location>
</feature>
<feature type="compositionally biased region" description="Low complexity" evidence="2">
    <location>
        <begin position="533"/>
        <end position="544"/>
    </location>
</feature>
<feature type="compositionally biased region" description="Acidic residues" evidence="2">
    <location>
        <begin position="778"/>
        <end position="792"/>
    </location>
</feature>
<feature type="compositionally biased region" description="Pro residues" evidence="2">
    <location>
        <begin position="865"/>
        <end position="875"/>
    </location>
</feature>
<feature type="compositionally biased region" description="Polar residues" evidence="2">
    <location>
        <begin position="879"/>
        <end position="891"/>
    </location>
</feature>
<feature type="compositionally biased region" description="Polar residues" evidence="2">
    <location>
        <begin position="929"/>
        <end position="940"/>
    </location>
</feature>
<feature type="compositionally biased region" description="Polar residues" evidence="2">
    <location>
        <begin position="983"/>
        <end position="999"/>
    </location>
</feature>
<feature type="compositionally biased region" description="Basic and acidic residues" evidence="2">
    <location>
        <begin position="1135"/>
        <end position="1147"/>
    </location>
</feature>
<feature type="compositionally biased region" description="Polar residues" evidence="2">
    <location>
        <begin position="1303"/>
        <end position="1317"/>
    </location>
</feature>
<feature type="modified residue" description="Phosphoserine" evidence="14">
    <location>
        <position position="52"/>
    </location>
</feature>
<feature type="modified residue" description="Phosphoserine" evidence="14">
    <location>
        <position position="316"/>
    </location>
</feature>
<feature type="modified residue" description="Phosphoserine" evidence="14">
    <location>
        <position position="499"/>
    </location>
</feature>
<feature type="modified residue" description="Phosphoserine" evidence="13">
    <location>
        <position position="534"/>
    </location>
</feature>
<feature type="modified residue" description="Phosphoserine" evidence="14">
    <location>
        <position position="767"/>
    </location>
</feature>
<feature type="modified residue" description="Phosphoserine" evidence="14">
    <location>
        <position position="770"/>
    </location>
</feature>
<feature type="modified residue" description="Phosphoserine" evidence="14">
    <location>
        <position position="848"/>
    </location>
</feature>
<feature type="modified residue" description="Phosphoserine" evidence="14">
    <location>
        <position position="886"/>
    </location>
</feature>
<feature type="modified residue" description="Phosphoserine" evidence="14">
    <location>
        <position position="997"/>
    </location>
</feature>
<feature type="modified residue" description="Phosphoserine" evidence="14">
    <location>
        <position position="1010"/>
    </location>
</feature>
<feature type="modified residue" description="Phosphoserine" evidence="1">
    <location>
        <position position="1172"/>
    </location>
</feature>
<feature type="modified residue" description="Phosphoserine" evidence="1">
    <location>
        <position position="1173"/>
    </location>
</feature>
<feature type="modified residue" description="Phosphoserine" evidence="14">
    <location>
        <position position="1228"/>
    </location>
</feature>
<feature type="modified residue" description="Phosphoserine" evidence="14">
    <location>
        <position position="1377"/>
    </location>
</feature>
<feature type="modified residue" description="Phosphoserine" evidence="13">
    <location>
        <position position="1387"/>
    </location>
</feature>
<feature type="modified residue" description="Phosphoserine" evidence="14">
    <location>
        <position position="1424"/>
    </location>
</feature>
<feature type="splice variant" id="VSP_025932" description="In isoform 4." evidence="9">
    <location>
        <begin position="1"/>
        <end position="1055"/>
    </location>
</feature>
<feature type="splice variant" id="VSP_025933" description="In isoform 5." evidence="10">
    <location>
        <begin position="1"/>
        <end position="753"/>
    </location>
</feature>
<feature type="splice variant" id="VSP_025934" description="In isoform 8." evidence="8">
    <location>
        <begin position="1"/>
        <end position="540"/>
    </location>
</feature>
<feature type="splice variant" id="VSP_025935" description="In isoform 7." evidence="10">
    <location>
        <begin position="1"/>
        <end position="119"/>
    </location>
</feature>
<feature type="splice variant" id="VSP_025936" description="In isoform 2." evidence="10">
    <original>MASSETEIRWAEPGLGKGPQRRRWAWAEDKRDVDRSSSQSWEEERLFPNATSPELLEDFRLAQQHLPPLEWDPHPQPDGHQDSESGETSGE</original>
    <variation>MLRSEWPVFP</variation>
    <location>
        <begin position="1"/>
        <end position="91"/>
    </location>
</feature>
<feature type="splice variant" id="VSP_025937" description="In isoform 6." evidence="10">
    <original>EDYHRLLTKYAEAENTIDQLRLGAKVNLFSDPPQPNHSIHTGMVPQGTKVLSFTIPQPRSAEWWPGPAEDPQASAASGWPSARGDLSPSSLTSMPTLGWLPENRDISEDQSSAEQTQALASQASQ</original>
    <variation>VSGTHGCGCVTKAPVGLGWRLIGVGRPGVEAGWGGEAWDRAWLGWEALGRRLVGWGGLGWRLARVGSPGMEASGVGRPGVGSPGVEPGGVGRPGVEAGWGRKPWDRGWWGGEAWGGGWLGQEALG</variation>
    <location>
        <begin position="448"/>
        <end position="572"/>
    </location>
</feature>
<feature type="splice variant" id="VSP_025938" description="In isoform 6." evidence="10">
    <location>
        <begin position="573"/>
        <end position="1439"/>
    </location>
</feature>
<feature type="splice variant" id="VSP_025939" description="In isoform 3." evidence="7">
    <location>
        <begin position="832"/>
        <end position="1439"/>
    </location>
</feature>
<feature type="splice variant" id="VSP_025940" description="In isoform 4." evidence="9">
    <original>PCGPTETIPSFLLTRAGRD</original>
    <variation>MSAGGGTRGYSPRSPGATS</variation>
    <location>
        <begin position="1056"/>
        <end position="1074"/>
    </location>
</feature>
<feature type="sequence variant" id="VAR_032586" description="In dbSNP:rs3748176." evidence="4 5">
    <original>P</original>
    <variation>L</variation>
    <location>
        <position position="624"/>
    </location>
</feature>
<feature type="sequence variant" id="VAR_032587" description="In dbSNP:rs1265891.">
    <original>Q</original>
    <variation>R</variation>
    <location>
        <position position="1097"/>
    </location>
</feature>
<feature type="sequence variant" id="VAR_032588" description="In dbSNP:rs3748178." evidence="5">
    <original>R</original>
    <variation>Q</variation>
    <location>
        <position position="1119"/>
    </location>
</feature>
<feature type="sequence variant" id="VAR_032589" description="In dbSNP:rs2250242." evidence="5 6">
    <original>S</original>
    <variation>P</variation>
    <location>
        <position position="1303"/>
    </location>
</feature>
<feature type="sequence variant" id="VAR_032590" description="In dbSNP:rs2787344.">
    <original>Y</original>
    <variation>C</variation>
    <location>
        <position position="1327"/>
    </location>
</feature>
<feature type="sequence conflict" description="In Ref. 3; BAD18725/BAC85132." evidence="11" ref="3">
    <original>D</original>
    <variation>V</variation>
    <location>
        <position position="799"/>
    </location>
</feature>
<feature type="sequence conflict" description="In Ref. 3; BAD18725." evidence="11" ref="3">
    <original>R</original>
    <variation>S</variation>
    <location>
        <position position="816"/>
    </location>
</feature>
<feature type="sequence conflict" description="In Ref. 6; AAK83024." evidence="11" ref="6">
    <original>L</original>
    <variation>F</variation>
    <location>
        <position position="1037"/>
    </location>
</feature>
<feature type="sequence conflict" description="In Ref. 3; BAD18725." evidence="11" ref="3">
    <original>P</original>
    <variation>Q</variation>
    <location>
        <position position="1103"/>
    </location>
</feature>
<feature type="sequence conflict" description="In Ref. 3; BAD18725." evidence="11" ref="3">
    <original>A</original>
    <variation>P</variation>
    <location>
        <position position="1114"/>
    </location>
</feature>
<feature type="sequence conflict" description="In Ref. 3; BAD18725." evidence="11" ref="3">
    <original>Q</original>
    <variation>P</variation>
    <location>
        <position position="1429"/>
    </location>
</feature>
<feature type="sequence conflict" description="In Ref. 3; BAD18725." evidence="11" ref="3">
    <original>GS</original>
    <variation>AP</variation>
    <location>
        <begin position="1435"/>
        <end position="1436"/>
    </location>
</feature>